<accession>Q83JS0</accession>
<accession>Q7C024</accession>
<gene>
    <name type="primary">rdgB</name>
    <name type="ordered locus">SF2945</name>
    <name type="ordered locus">S3149</name>
</gene>
<evidence type="ECO:0000255" key="1">
    <source>
        <dbReference type="HAMAP-Rule" id="MF_01405"/>
    </source>
</evidence>
<organism>
    <name type="scientific">Shigella flexneri</name>
    <dbReference type="NCBI Taxonomy" id="623"/>
    <lineage>
        <taxon>Bacteria</taxon>
        <taxon>Pseudomonadati</taxon>
        <taxon>Pseudomonadota</taxon>
        <taxon>Gammaproteobacteria</taxon>
        <taxon>Enterobacterales</taxon>
        <taxon>Enterobacteriaceae</taxon>
        <taxon>Shigella</taxon>
    </lineage>
</organism>
<protein>
    <recommendedName>
        <fullName evidence="1">dITP/XTP pyrophosphatase</fullName>
        <ecNumber evidence="1">3.6.1.66</ecNumber>
    </recommendedName>
    <alternativeName>
        <fullName evidence="1">Non-canonical purine NTP pyrophosphatase</fullName>
    </alternativeName>
    <alternativeName>
        <fullName evidence="1">Non-standard purine NTP pyrophosphatase</fullName>
    </alternativeName>
    <alternativeName>
        <fullName evidence="1">Nucleoside-triphosphate diphosphatase</fullName>
    </alternativeName>
    <alternativeName>
        <fullName evidence="1">Nucleoside-triphosphate pyrophosphatase</fullName>
        <shortName evidence="1">NTPase</shortName>
    </alternativeName>
</protein>
<dbReference type="EC" id="3.6.1.66" evidence="1"/>
<dbReference type="EMBL" id="AE005674">
    <property type="protein sequence ID" value="AAN44426.1"/>
    <property type="molecule type" value="Genomic_DNA"/>
</dbReference>
<dbReference type="EMBL" id="AE014073">
    <property type="protein sequence ID" value="AAP18251.1"/>
    <property type="molecule type" value="Genomic_DNA"/>
</dbReference>
<dbReference type="RefSeq" id="WP_001174735.1">
    <property type="nucleotide sequence ID" value="NZ_WPGW01000085.1"/>
</dbReference>
<dbReference type="SMR" id="Q83JS0"/>
<dbReference type="STRING" id="198214.SF2945"/>
<dbReference type="PaxDb" id="198214-SF2945"/>
<dbReference type="KEGG" id="sfl:SF2945"/>
<dbReference type="KEGG" id="sfx:S3149"/>
<dbReference type="PATRIC" id="fig|198214.7.peg.3502"/>
<dbReference type="HOGENOM" id="CLU_082080_0_3_6"/>
<dbReference type="Proteomes" id="UP000001006">
    <property type="component" value="Chromosome"/>
</dbReference>
<dbReference type="Proteomes" id="UP000002673">
    <property type="component" value="Chromosome"/>
</dbReference>
<dbReference type="GO" id="GO:0005829">
    <property type="term" value="C:cytosol"/>
    <property type="evidence" value="ECO:0007669"/>
    <property type="project" value="TreeGrafter"/>
</dbReference>
<dbReference type="GO" id="GO:0035870">
    <property type="term" value="F:dITP diphosphatase activity"/>
    <property type="evidence" value="ECO:0007669"/>
    <property type="project" value="RHEA"/>
</dbReference>
<dbReference type="GO" id="GO:0036220">
    <property type="term" value="F:ITP diphosphatase activity"/>
    <property type="evidence" value="ECO:0007669"/>
    <property type="project" value="UniProtKB-EC"/>
</dbReference>
<dbReference type="GO" id="GO:0046872">
    <property type="term" value="F:metal ion binding"/>
    <property type="evidence" value="ECO:0007669"/>
    <property type="project" value="UniProtKB-KW"/>
</dbReference>
<dbReference type="GO" id="GO:0000166">
    <property type="term" value="F:nucleotide binding"/>
    <property type="evidence" value="ECO:0007669"/>
    <property type="project" value="UniProtKB-KW"/>
</dbReference>
<dbReference type="GO" id="GO:0017111">
    <property type="term" value="F:ribonucleoside triphosphate phosphatase activity"/>
    <property type="evidence" value="ECO:0007669"/>
    <property type="project" value="InterPro"/>
</dbReference>
<dbReference type="GO" id="GO:0036222">
    <property type="term" value="F:XTP diphosphatase activity"/>
    <property type="evidence" value="ECO:0007669"/>
    <property type="project" value="RHEA"/>
</dbReference>
<dbReference type="GO" id="GO:0009117">
    <property type="term" value="P:nucleotide metabolic process"/>
    <property type="evidence" value="ECO:0007669"/>
    <property type="project" value="UniProtKB-KW"/>
</dbReference>
<dbReference type="GO" id="GO:0009146">
    <property type="term" value="P:purine nucleoside triphosphate catabolic process"/>
    <property type="evidence" value="ECO:0007669"/>
    <property type="project" value="UniProtKB-UniRule"/>
</dbReference>
<dbReference type="CDD" id="cd00515">
    <property type="entry name" value="HAM1"/>
    <property type="match status" value="1"/>
</dbReference>
<dbReference type="FunFam" id="3.90.950.10:FF:000001">
    <property type="entry name" value="dITP/XTP pyrophosphatase"/>
    <property type="match status" value="1"/>
</dbReference>
<dbReference type="Gene3D" id="3.90.950.10">
    <property type="match status" value="1"/>
</dbReference>
<dbReference type="HAMAP" id="MF_01405">
    <property type="entry name" value="Non_canon_purine_NTPase"/>
    <property type="match status" value="1"/>
</dbReference>
<dbReference type="InterPro" id="IPR020922">
    <property type="entry name" value="dITP/XTP_pyrophosphatase"/>
</dbReference>
<dbReference type="InterPro" id="IPR029001">
    <property type="entry name" value="ITPase-like_fam"/>
</dbReference>
<dbReference type="InterPro" id="IPR002637">
    <property type="entry name" value="RdgB/HAM1"/>
</dbReference>
<dbReference type="NCBIfam" id="NF011397">
    <property type="entry name" value="PRK14822.1"/>
    <property type="match status" value="1"/>
</dbReference>
<dbReference type="NCBIfam" id="TIGR00042">
    <property type="entry name" value="RdgB/HAM1 family non-canonical purine NTP pyrophosphatase"/>
    <property type="match status" value="1"/>
</dbReference>
<dbReference type="PANTHER" id="PTHR11067:SF9">
    <property type="entry name" value="INOSINE TRIPHOSPHATE PYROPHOSPHATASE"/>
    <property type="match status" value="1"/>
</dbReference>
<dbReference type="PANTHER" id="PTHR11067">
    <property type="entry name" value="INOSINE TRIPHOSPHATE PYROPHOSPHATASE/HAM1 PROTEIN"/>
    <property type="match status" value="1"/>
</dbReference>
<dbReference type="Pfam" id="PF01725">
    <property type="entry name" value="Ham1p_like"/>
    <property type="match status" value="1"/>
</dbReference>
<dbReference type="SUPFAM" id="SSF52972">
    <property type="entry name" value="ITPase-like"/>
    <property type="match status" value="1"/>
</dbReference>
<name>IXTPA_SHIFL</name>
<proteinExistence type="inferred from homology"/>
<sequence length="197" mass="20951">MQKVVLATGNAGKVRELASLLSDFGLDIVAQTDLGVDSAEETGLTFIENAILKARHAAKVTGLPAIADDSGLAVDALGGAPGIYSARYSGEDATDQKNLQKLLETLKDVPDDQRQARFHCVLVYLRHAEDPTPLVCHGSWPGVITREPAGTGGFGYDPIFFVPSEGKTAAELTREEKSAISHRGQALKLLLDALRNG</sequence>
<feature type="chain" id="PRO_0000178225" description="dITP/XTP pyrophosphatase">
    <location>
        <begin position="1"/>
        <end position="197"/>
    </location>
</feature>
<feature type="active site" description="Proton acceptor" evidence="1">
    <location>
        <position position="69"/>
    </location>
</feature>
<feature type="binding site" evidence="1">
    <location>
        <begin position="8"/>
        <end position="13"/>
    </location>
    <ligand>
        <name>substrate</name>
    </ligand>
</feature>
<feature type="binding site" evidence="1">
    <location>
        <position position="40"/>
    </location>
    <ligand>
        <name>Mg(2+)</name>
        <dbReference type="ChEBI" id="CHEBI:18420"/>
    </ligand>
</feature>
<feature type="binding site" evidence="1">
    <location>
        <position position="69"/>
    </location>
    <ligand>
        <name>Mg(2+)</name>
        <dbReference type="ChEBI" id="CHEBI:18420"/>
    </ligand>
</feature>
<feature type="binding site" evidence="1">
    <location>
        <position position="70"/>
    </location>
    <ligand>
        <name>substrate</name>
    </ligand>
</feature>
<feature type="binding site" evidence="1">
    <location>
        <begin position="154"/>
        <end position="157"/>
    </location>
    <ligand>
        <name>substrate</name>
    </ligand>
</feature>
<feature type="binding site" evidence="1">
    <location>
        <position position="177"/>
    </location>
    <ligand>
        <name>substrate</name>
    </ligand>
</feature>
<feature type="binding site" evidence="1">
    <location>
        <begin position="182"/>
        <end position="183"/>
    </location>
    <ligand>
        <name>substrate</name>
    </ligand>
</feature>
<comment type="function">
    <text evidence="1">Pyrophosphatase that catalyzes the hydrolysis of nucleoside triphosphates to their monophosphate derivatives, with a high preference for the non-canonical purine nucleotides XTP (xanthosine triphosphate), dITP (deoxyinosine triphosphate) and ITP. Seems to function as a house-cleaning enzyme that removes non-canonical purine nucleotides from the nucleotide pool, thus preventing their incorporation into DNA/RNA and avoiding chromosomal lesions.</text>
</comment>
<comment type="catalytic activity">
    <reaction evidence="1">
        <text>XTP + H2O = XMP + diphosphate + H(+)</text>
        <dbReference type="Rhea" id="RHEA:28610"/>
        <dbReference type="ChEBI" id="CHEBI:15377"/>
        <dbReference type="ChEBI" id="CHEBI:15378"/>
        <dbReference type="ChEBI" id="CHEBI:33019"/>
        <dbReference type="ChEBI" id="CHEBI:57464"/>
        <dbReference type="ChEBI" id="CHEBI:61314"/>
        <dbReference type="EC" id="3.6.1.66"/>
    </reaction>
</comment>
<comment type="catalytic activity">
    <reaction evidence="1">
        <text>dITP + H2O = dIMP + diphosphate + H(+)</text>
        <dbReference type="Rhea" id="RHEA:28342"/>
        <dbReference type="ChEBI" id="CHEBI:15377"/>
        <dbReference type="ChEBI" id="CHEBI:15378"/>
        <dbReference type="ChEBI" id="CHEBI:33019"/>
        <dbReference type="ChEBI" id="CHEBI:61194"/>
        <dbReference type="ChEBI" id="CHEBI:61382"/>
        <dbReference type="EC" id="3.6.1.66"/>
    </reaction>
</comment>
<comment type="catalytic activity">
    <reaction evidence="1">
        <text>ITP + H2O = IMP + diphosphate + H(+)</text>
        <dbReference type="Rhea" id="RHEA:29399"/>
        <dbReference type="ChEBI" id="CHEBI:15377"/>
        <dbReference type="ChEBI" id="CHEBI:15378"/>
        <dbReference type="ChEBI" id="CHEBI:33019"/>
        <dbReference type="ChEBI" id="CHEBI:58053"/>
        <dbReference type="ChEBI" id="CHEBI:61402"/>
        <dbReference type="EC" id="3.6.1.66"/>
    </reaction>
</comment>
<comment type="cofactor">
    <cofactor evidence="1">
        <name>Mg(2+)</name>
        <dbReference type="ChEBI" id="CHEBI:18420"/>
    </cofactor>
    <text evidence="1">Binds 1 Mg(2+) ion per subunit.</text>
</comment>
<comment type="subunit">
    <text evidence="1">Homodimer.</text>
</comment>
<comment type="similarity">
    <text evidence="1">Belongs to the HAM1 NTPase family.</text>
</comment>
<reference key="1">
    <citation type="journal article" date="2002" name="Nucleic Acids Res.">
        <title>Genome sequence of Shigella flexneri 2a: insights into pathogenicity through comparison with genomes of Escherichia coli K12 and O157.</title>
        <authorList>
            <person name="Jin Q."/>
            <person name="Yuan Z."/>
            <person name="Xu J."/>
            <person name="Wang Y."/>
            <person name="Shen Y."/>
            <person name="Lu W."/>
            <person name="Wang J."/>
            <person name="Liu H."/>
            <person name="Yang J."/>
            <person name="Yang F."/>
            <person name="Zhang X."/>
            <person name="Zhang J."/>
            <person name="Yang G."/>
            <person name="Wu H."/>
            <person name="Qu D."/>
            <person name="Dong J."/>
            <person name="Sun L."/>
            <person name="Xue Y."/>
            <person name="Zhao A."/>
            <person name="Gao Y."/>
            <person name="Zhu J."/>
            <person name="Kan B."/>
            <person name="Ding K."/>
            <person name="Chen S."/>
            <person name="Cheng H."/>
            <person name="Yao Z."/>
            <person name="He B."/>
            <person name="Chen R."/>
            <person name="Ma D."/>
            <person name="Qiang B."/>
            <person name="Wen Y."/>
            <person name="Hou Y."/>
            <person name="Yu J."/>
        </authorList>
    </citation>
    <scope>NUCLEOTIDE SEQUENCE [LARGE SCALE GENOMIC DNA]</scope>
    <source>
        <strain>301 / Serotype 2a</strain>
    </source>
</reference>
<reference key="2">
    <citation type="journal article" date="2003" name="Infect. Immun.">
        <title>Complete genome sequence and comparative genomics of Shigella flexneri serotype 2a strain 2457T.</title>
        <authorList>
            <person name="Wei J."/>
            <person name="Goldberg M.B."/>
            <person name="Burland V."/>
            <person name="Venkatesan M.M."/>
            <person name="Deng W."/>
            <person name="Fournier G."/>
            <person name="Mayhew G.F."/>
            <person name="Plunkett G. III"/>
            <person name="Rose D.J."/>
            <person name="Darling A."/>
            <person name="Mau B."/>
            <person name="Perna N.T."/>
            <person name="Payne S.M."/>
            <person name="Runyen-Janecky L.J."/>
            <person name="Zhou S."/>
            <person name="Schwartz D.C."/>
            <person name="Blattner F.R."/>
        </authorList>
    </citation>
    <scope>NUCLEOTIDE SEQUENCE [LARGE SCALE GENOMIC DNA]</scope>
    <source>
        <strain>ATCC 700930 / 2457T / Serotype 2a</strain>
    </source>
</reference>
<keyword id="KW-0378">Hydrolase</keyword>
<keyword id="KW-0460">Magnesium</keyword>
<keyword id="KW-0479">Metal-binding</keyword>
<keyword id="KW-0546">Nucleotide metabolism</keyword>
<keyword id="KW-0547">Nucleotide-binding</keyword>
<keyword id="KW-1185">Reference proteome</keyword>